<organism>
    <name type="scientific">Comamonas testosteroni</name>
    <name type="common">Pseudomonas testosteroni</name>
    <dbReference type="NCBI Taxonomy" id="285"/>
    <lineage>
        <taxon>Bacteria</taxon>
        <taxon>Pseudomonadati</taxon>
        <taxon>Pseudomonadota</taxon>
        <taxon>Betaproteobacteria</taxon>
        <taxon>Burkholderiales</taxon>
        <taxon>Comamonadaceae</taxon>
        <taxon>Comamonas</taxon>
    </lineage>
</organism>
<name>DIDH_COMTE</name>
<sequence length="257" mass="26392">MSIIVISGCATGIGAATRKVLEAAGHQIVGIDIRDAEVIADLSTAEGRKQAIADVLAKCSKGMDGLVLCAGLGPQTKVLGNVVSVNYFGATELMDAFLPALKKGHQPAAVVISSVASAHLAFDKNPLALALEAGEEAKARAIVEHAGEQGGNLAYAGSKNALTVAVRKRAAAWGEAGVRLNTIAPGATETPLLQAGLQDPRYGESIAKFVPPMGRRAEPSEMASVIAFLMSPAASYVHGAQIVIDGGIDAVMRPTQF</sequence>
<comment type="function">
    <text>Catalyzes the reversible interconversion of hydroxy and oxo groups at position 3 of the steroid nucleus. Along with the 3 alpha-hydroxysteroid dehydrogenase and 3-oxo-reductase activities towards a variety of cis or trans fused A/B ring steroids, it also reduces several xenobiotic carbonyl compounds, including a metyrapone-based class of insecticides, to the respective alcohol metabolites. No detectable activity on testosterone, progesterone or 3-oxo-desogestrel.</text>
</comment>
<comment type="catalytic activity">
    <reaction>
        <text>a 3alpha-hydroxysteroid + NADP(+) = a 3-oxosteroid + NADPH + H(+)</text>
        <dbReference type="Rhea" id="RHEA:34783"/>
        <dbReference type="ChEBI" id="CHEBI:15378"/>
        <dbReference type="ChEBI" id="CHEBI:36835"/>
        <dbReference type="ChEBI" id="CHEBI:47788"/>
        <dbReference type="ChEBI" id="CHEBI:57783"/>
        <dbReference type="ChEBI" id="CHEBI:58349"/>
        <dbReference type="EC" id="1.1.1.50"/>
    </reaction>
</comment>
<comment type="catalytic activity">
    <reaction>
        <text>a 3alpha-hydroxysteroid + NAD(+) = a 3-oxosteroid + NADH + H(+)</text>
        <dbReference type="Rhea" id="RHEA:34779"/>
        <dbReference type="ChEBI" id="CHEBI:15378"/>
        <dbReference type="ChEBI" id="CHEBI:36835"/>
        <dbReference type="ChEBI" id="CHEBI:47788"/>
        <dbReference type="ChEBI" id="CHEBI:57540"/>
        <dbReference type="ChEBI" id="CHEBI:57945"/>
        <dbReference type="EC" id="1.1.1.50"/>
    </reaction>
</comment>
<comment type="biophysicochemical properties">
    <kinetics>
        <KM evidence="2 5">35.7 uM for androstandione</KM>
        <KM evidence="2 5">24.4 uM for androsterone</KM>
        <KM evidence="2 5">3 uM for fusidic acid</KM>
        <KM evidence="2 5">610 uM for metyrapone</KM>
        <Vmax evidence="2 5">52.3 umol/min/mg enzyme for androstandione</Vmax>
        <Vmax evidence="2 5">10.3 umol/min/mg enzyme for androsterone</Vmax>
        <Vmax evidence="2 5">18.1 umol/min/mg enzyme fusidic acid</Vmax>
        <Vmax evidence="2 5">0.63 umol/min/mg enzyme metyrapone</Vmax>
    </kinetics>
</comment>
<comment type="subunit">
    <text evidence="2 3">Homodimer.</text>
</comment>
<comment type="subcellular location">
    <subcellularLocation>
        <location evidence="5">Cytoplasm</location>
    </subcellularLocation>
</comment>
<comment type="induction">
    <text evidence="4 5">By steroids. Derepression of gene transcription occurs by binding of the steroid inducer molecule to a repressor protein.</text>
</comment>
<comment type="miscellaneous">
    <text>This protein is thought to initiate prokaryotic steroid catabolism.</text>
</comment>
<comment type="similarity">
    <text evidence="6">Belongs to the short-chain dehydrogenases/reductases (SDR) family.</text>
</comment>
<keyword id="KW-0002">3D-structure</keyword>
<keyword id="KW-0963">Cytoplasm</keyword>
<keyword id="KW-0903">Direct protein sequencing</keyword>
<keyword id="KW-0520">NAD</keyword>
<keyword id="KW-0547">Nucleotide-binding</keyword>
<keyword id="KW-0560">Oxidoreductase</keyword>
<evidence type="ECO:0000250" key="1"/>
<evidence type="ECO:0000269" key="2">
    <source>
    </source>
</evidence>
<evidence type="ECO:0000269" key="3">
    <source>
    </source>
</evidence>
<evidence type="ECO:0000269" key="4">
    <source>
    </source>
</evidence>
<evidence type="ECO:0000269" key="5">
    <source>
    </source>
</evidence>
<evidence type="ECO:0000305" key="6"/>
<evidence type="ECO:0007829" key="7">
    <source>
        <dbReference type="PDB" id="1FJH"/>
    </source>
</evidence>
<reference key="1">
    <citation type="journal article" date="1998" name="J. Biol. Chem.">
        <title>Molecular cloning, overexpression, and characterization of steroid-inducible 3-alpha-hydroxysteroid dehydrogenase/carbonyl reductase from Comamonas testosteroni. A novel member of the short-chain dehydrogenase/reductase superfamily.</title>
        <authorList>
            <person name="Mobus E."/>
            <person name="Maser E."/>
        </authorList>
    </citation>
    <scope>NUCLEOTIDE SEQUENCE [GENOMIC DNA]</scope>
    <source>
        <strain>ATCC 11996 / DSM 50244 / CCUG 1426 / IAM 12419 / JCM 5832 / NCIMB 8955 / NBRC 14951 / NCTC 10698 / NRRL B-2611</strain>
    </source>
</reference>
<reference key="2">
    <citation type="journal article" date="1996" name="Eur. J. Biochem.">
        <title>Characterization of a 3 alpha-hydroxysteroid dehydrogenase/carbonyl reductase from the Gram-negative bacterium Comamonas testosteroni.</title>
        <authorList>
            <person name="Oppermann U.C.T."/>
            <person name="Maser E."/>
        </authorList>
    </citation>
    <scope>PROTEIN SEQUENCE OF 2-31</scope>
    <scope>BIOPHYSICOCHEMICAL PROPERTIES</scope>
    <scope>SUBCELLULAR LOCATION</scope>
    <scope>INDUCTION</scope>
    <source>
        <strain>ATCC 11996 / DSM 50244 / CCUG 1426 / IAM 12419 / JCM 5832 / NCIMB 8955 / NBRC 14951 / NCTC 10698 / NRRL B-2611</strain>
    </source>
</reference>
<reference key="3">
    <citation type="journal article" date="2000" name="Biochem. Biophys. Res. Commun.">
        <title>Functional expression, purification, and characterization of 3alpha-hydroxysteroid dehydrogenase/carbonyl reductase from Comamonas testosteroni.</title>
        <authorList>
            <person name="Maser E."/>
            <person name="Mobus E."/>
            <person name="Xiong G."/>
        </authorList>
    </citation>
    <scope>BIOPHYSICOCHEMICAL PROPERTIES</scope>
    <scope>SUBUNIT</scope>
</reference>
<reference key="4">
    <citation type="journal article" date="2001" name="J. Biol. Chem.">
        <title>Regulation of the steroid-inducible 3-alpha-hydroxysteroid dehydrogenase/carbonyl reductase gene in Comamonas testosteroni.</title>
        <authorList>
            <person name="Xiong G."/>
            <person name="Maser E."/>
        </authorList>
    </citation>
    <scope>INDUCTION</scope>
    <source>
        <strain>ATCC 11996 / DSM 50244 / CCUG 1426 / IAM 12419 / JCM 5832 / NCIMB 8955 / NBRC 14951 / NCTC 10698 / NRRL B-2611</strain>
    </source>
</reference>
<reference key="5">
    <citation type="journal article" date="2000" name="J. Biol. Chem.">
        <title>The crystal structure of 3alpha -hydroxysteroid dehydrogenase/carbonyl reductase from Comamonas testosteroni shows a novel oligomerization pattern within the short chain dehydrogenase/reductase family.</title>
        <authorList>
            <person name="Grimm C."/>
            <person name="Maser E."/>
            <person name="Mobus E."/>
            <person name="Klebe G."/>
            <person name="Reuter K."/>
            <person name="Ficner R."/>
        </authorList>
    </citation>
    <scope>X-RAY CRYSTALLOGRAPHY (1.68 ANGSTROMS) ALONE AND IN COMPLEX WITH NAD</scope>
    <scope>SUBUNIT</scope>
</reference>
<feature type="initiator methionine" description="Removed" evidence="5">
    <location>
        <position position="1"/>
    </location>
</feature>
<feature type="chain" id="PRO_0000054656" description="3-alpha-hydroxysteroid dehydrogenase/carbonyl reductase">
    <location>
        <begin position="2"/>
        <end position="257"/>
    </location>
</feature>
<feature type="active site" description="Proton acceptor" evidence="1">
    <location>
        <position position="155"/>
    </location>
</feature>
<feature type="binding site" evidence="3">
    <location>
        <begin position="8"/>
        <end position="13"/>
    </location>
    <ligand>
        <name>NAD(+)</name>
        <dbReference type="ChEBI" id="CHEBI:57540"/>
    </ligand>
</feature>
<feature type="binding site" evidence="3">
    <location>
        <position position="32"/>
    </location>
    <ligand>
        <name>NAD(+)</name>
        <dbReference type="ChEBI" id="CHEBI:57540"/>
    </ligand>
</feature>
<feature type="binding site" evidence="3">
    <location>
        <begin position="41"/>
        <end position="42"/>
    </location>
    <ligand>
        <name>NAD(+)</name>
        <dbReference type="ChEBI" id="CHEBI:57540"/>
    </ligand>
</feature>
<feature type="binding site" evidence="3">
    <location>
        <position position="71"/>
    </location>
    <ligand>
        <name>NAD(+)</name>
        <dbReference type="ChEBI" id="CHEBI:57540"/>
    </ligand>
</feature>
<feature type="binding site" evidence="1">
    <location>
        <position position="114"/>
    </location>
    <ligand>
        <name>substrate</name>
    </ligand>
</feature>
<feature type="binding site" evidence="3">
    <location>
        <position position="155"/>
    </location>
    <ligand>
        <name>NAD(+)</name>
        <dbReference type="ChEBI" id="CHEBI:57540"/>
    </ligand>
</feature>
<feature type="binding site" evidence="3">
    <location>
        <position position="159"/>
    </location>
    <ligand>
        <name>NAD(+)</name>
        <dbReference type="ChEBI" id="CHEBI:57540"/>
    </ligand>
</feature>
<feature type="sequence conflict" description="In Ref. 2; AA sequence." evidence="6" ref="2">
    <original>S</original>
    <variation>D</variation>
    <location>
        <position position="2"/>
    </location>
</feature>
<feature type="sequence conflict" description="In Ref. 2; AA sequence." evidence="6" ref="2">
    <original>C</original>
    <variation>A</variation>
    <location>
        <position position="9"/>
    </location>
</feature>
<feature type="sequence conflict" description="In Ref. 2; AA sequence." evidence="6" ref="2">
    <original>R</original>
    <variation>C</variation>
    <location>
        <position position="18"/>
    </location>
</feature>
<feature type="sequence conflict" description="In Ref. 2; AA sequence." evidence="6" ref="2">
    <original>H</original>
    <variation>S</variation>
    <location>
        <position position="26"/>
    </location>
</feature>
<feature type="sequence conflict" description="In Ref. 2; AA sequence." evidence="6" ref="2">
    <original>G</original>
    <variation>S</variation>
    <location>
        <position position="30"/>
    </location>
</feature>
<feature type="strand" evidence="7">
    <location>
        <begin position="3"/>
        <end position="7"/>
    </location>
</feature>
<feature type="turn" evidence="7">
    <location>
        <begin position="8"/>
        <end position="10"/>
    </location>
</feature>
<feature type="helix" evidence="7">
    <location>
        <begin position="12"/>
        <end position="23"/>
    </location>
</feature>
<feature type="strand" evidence="7">
    <location>
        <begin position="27"/>
        <end position="39"/>
    </location>
</feature>
<feature type="helix" evidence="7">
    <location>
        <begin position="45"/>
        <end position="56"/>
    </location>
</feature>
<feature type="strand" evidence="7">
    <location>
        <begin position="64"/>
        <end position="68"/>
    </location>
</feature>
<feature type="helix" evidence="7">
    <location>
        <begin position="79"/>
        <end position="86"/>
    </location>
</feature>
<feature type="helix" evidence="7">
    <location>
        <begin position="88"/>
        <end position="102"/>
    </location>
</feature>
<feature type="strand" evidence="7">
    <location>
        <begin position="104"/>
        <end position="106"/>
    </location>
</feature>
<feature type="strand" evidence="7">
    <location>
        <begin position="108"/>
        <end position="112"/>
    </location>
</feature>
<feature type="helix" evidence="7">
    <location>
        <begin position="115"/>
        <end position="118"/>
    </location>
</feature>
<feature type="helix" evidence="7">
    <location>
        <begin position="122"/>
        <end position="124"/>
    </location>
</feature>
<feature type="helix" evidence="7">
    <location>
        <begin position="128"/>
        <end position="133"/>
    </location>
</feature>
<feature type="helix" evidence="7">
    <location>
        <begin position="136"/>
        <end position="144"/>
    </location>
</feature>
<feature type="helix" evidence="7">
    <location>
        <begin position="150"/>
        <end position="168"/>
    </location>
</feature>
<feature type="helix" evidence="7">
    <location>
        <begin position="170"/>
        <end position="175"/>
    </location>
</feature>
<feature type="strand" evidence="7">
    <location>
        <begin position="179"/>
        <end position="185"/>
    </location>
</feature>
<feature type="helix" evidence="7">
    <location>
        <begin position="220"/>
        <end position="229"/>
    </location>
</feature>
<feature type="helix" evidence="7">
    <location>
        <begin position="232"/>
        <end position="234"/>
    </location>
</feature>
<feature type="strand" evidence="7">
    <location>
        <begin position="241"/>
        <end position="245"/>
    </location>
</feature>
<feature type="helix" evidence="7">
    <location>
        <begin position="248"/>
        <end position="252"/>
    </location>
</feature>
<dbReference type="EC" id="1.1.1.50"/>
<dbReference type="EMBL" id="AF092031">
    <property type="protein sequence ID" value="AAC79849.1"/>
    <property type="molecule type" value="Genomic_DNA"/>
</dbReference>
<dbReference type="PIR" id="JC7291">
    <property type="entry name" value="JC7291"/>
</dbReference>
<dbReference type="RefSeq" id="WP_003078312.1">
    <property type="nucleotide sequence ID" value="NZ_UFXL01000001.1"/>
</dbReference>
<dbReference type="PDB" id="1FJH">
    <property type="method" value="X-ray"/>
    <property type="resolution" value="1.68 A"/>
    <property type="chains" value="A/B=1-257"/>
</dbReference>
<dbReference type="PDB" id="1FK8">
    <property type="method" value="X-ray"/>
    <property type="resolution" value="1.95 A"/>
    <property type="chains" value="A/B=1-257"/>
</dbReference>
<dbReference type="PDBsum" id="1FJH"/>
<dbReference type="PDBsum" id="1FK8"/>
<dbReference type="SMR" id="P80702"/>
<dbReference type="BioCyc" id="MetaCyc:MONOMER-16934"/>
<dbReference type="BRENDA" id="1.1.1.357">
    <property type="organism ID" value="1590"/>
</dbReference>
<dbReference type="BRENDA" id="1.1.1.50">
    <property type="organism ID" value="1590"/>
</dbReference>
<dbReference type="SABIO-RK" id="P80702"/>
<dbReference type="EvolutionaryTrace" id="P80702"/>
<dbReference type="GO" id="GO:0005737">
    <property type="term" value="C:cytoplasm"/>
    <property type="evidence" value="ECO:0007669"/>
    <property type="project" value="UniProtKB-SubCell"/>
</dbReference>
<dbReference type="GO" id="GO:0047042">
    <property type="term" value="F:androsterone dehydrogenase (B-specific) activity"/>
    <property type="evidence" value="ECO:0007669"/>
    <property type="project" value="UniProtKB-EC"/>
</dbReference>
<dbReference type="GO" id="GO:0000166">
    <property type="term" value="F:nucleotide binding"/>
    <property type="evidence" value="ECO:0007669"/>
    <property type="project" value="UniProtKB-KW"/>
</dbReference>
<dbReference type="CDD" id="cd05328">
    <property type="entry name" value="3alpha_HSD_SDR_c"/>
    <property type="match status" value="1"/>
</dbReference>
<dbReference type="Gene3D" id="3.40.50.720">
    <property type="entry name" value="NAD(P)-binding Rossmann-like Domain"/>
    <property type="match status" value="1"/>
</dbReference>
<dbReference type="InterPro" id="IPR036291">
    <property type="entry name" value="NAD(P)-bd_dom_sf"/>
</dbReference>
<dbReference type="InterPro" id="IPR002347">
    <property type="entry name" value="SDR_fam"/>
</dbReference>
<dbReference type="PANTHER" id="PTHR24321">
    <property type="entry name" value="DEHYDROGENASES, SHORT CHAIN"/>
    <property type="match status" value="1"/>
</dbReference>
<dbReference type="PANTHER" id="PTHR24321:SF8">
    <property type="entry name" value="ESTRADIOL 17-BETA-DEHYDROGENASE 8-RELATED"/>
    <property type="match status" value="1"/>
</dbReference>
<dbReference type="Pfam" id="PF00106">
    <property type="entry name" value="adh_short"/>
    <property type="match status" value="1"/>
</dbReference>
<dbReference type="Pfam" id="PF13561">
    <property type="entry name" value="adh_short_C2"/>
    <property type="match status" value="1"/>
</dbReference>
<dbReference type="PRINTS" id="PR00081">
    <property type="entry name" value="GDHRDH"/>
</dbReference>
<dbReference type="SUPFAM" id="SSF51735">
    <property type="entry name" value="NAD(P)-binding Rossmann-fold domains"/>
    <property type="match status" value="1"/>
</dbReference>
<gene>
    <name type="primary">hsdA</name>
</gene>
<proteinExistence type="evidence at protein level"/>
<accession>P80702</accession>
<accession>Q9ZFY9</accession>
<protein>
    <recommendedName>
        <fullName>3-alpha-hydroxysteroid dehydrogenase/carbonyl reductase</fullName>
        <shortName>3-alpha-HSD</shortName>
        <ecNumber>1.1.1.50</ecNumber>
    </recommendedName>
    <alternativeName>
        <fullName>3-alpha-hydroxysteroid dehydrogenase/3-oxosteroid reductase</fullName>
    </alternativeName>
    <alternativeName>
        <fullName>HSD28</fullName>
    </alternativeName>
    <alternativeName>
        <fullName>Hydroxyprostaglandin dehydrogenase</fullName>
    </alternativeName>
</protein>